<accession>A3KNN3</accession>
<comment type="subcellular location">
    <subcellularLocation>
        <location evidence="2">Membrane</location>
        <topology evidence="2">Single-pass membrane protein</topology>
    </subcellularLocation>
</comment>
<comment type="similarity">
    <text evidence="2">Belongs to the LRRC3 family.</text>
</comment>
<protein>
    <recommendedName>
        <fullName>Leucine-rich repeat-containing protein 3B</fullName>
    </recommendedName>
</protein>
<gene>
    <name type="primary">lrrc3b</name>
    <name type="ORF">zgc:162270</name>
</gene>
<dbReference type="EMBL" id="BC133927">
    <property type="protein sequence ID" value="AAI33928.1"/>
    <property type="molecule type" value="mRNA"/>
</dbReference>
<dbReference type="RefSeq" id="NP_001082985.1">
    <property type="nucleotide sequence ID" value="NM_001089516.1"/>
</dbReference>
<dbReference type="RefSeq" id="XP_005173781.1">
    <property type="nucleotide sequence ID" value="XM_005173724.5"/>
</dbReference>
<dbReference type="SMR" id="A3KNN3"/>
<dbReference type="FunCoup" id="A3KNN3">
    <property type="interactions" value="888"/>
</dbReference>
<dbReference type="STRING" id="7955.ENSDARP00000086615"/>
<dbReference type="GlyCosmos" id="A3KNN3">
    <property type="glycosylation" value="2 sites, No reported glycans"/>
</dbReference>
<dbReference type="PaxDb" id="7955-ENSDARP00000086615"/>
<dbReference type="ABCD" id="A3KNN3">
    <property type="antibodies" value="2 sequenced antibodies"/>
</dbReference>
<dbReference type="Ensembl" id="ENSDART00000092183">
    <property type="protein sequence ID" value="ENSDARP00000086615"/>
    <property type="gene ID" value="ENSDARG00000063215"/>
</dbReference>
<dbReference type="GeneID" id="100037364"/>
<dbReference type="KEGG" id="dre:100037364"/>
<dbReference type="AGR" id="ZFIN:ZDB-GENE-070410-55"/>
<dbReference type="CTD" id="116135"/>
<dbReference type="ZFIN" id="ZDB-GENE-070410-55">
    <property type="gene designation" value="lrrc3b"/>
</dbReference>
<dbReference type="eggNOG" id="KOG4237">
    <property type="taxonomic scope" value="Eukaryota"/>
</dbReference>
<dbReference type="HOGENOM" id="CLU_064640_0_0_1"/>
<dbReference type="InParanoid" id="A3KNN3"/>
<dbReference type="OMA" id="PKGCACQ"/>
<dbReference type="OrthoDB" id="10068119at2759"/>
<dbReference type="PhylomeDB" id="A3KNN3"/>
<dbReference type="TreeFam" id="TF327070"/>
<dbReference type="PRO" id="PR:A3KNN3"/>
<dbReference type="Proteomes" id="UP000000437">
    <property type="component" value="Chromosome 19"/>
</dbReference>
<dbReference type="Bgee" id="ENSDARG00000063215">
    <property type="expression patterns" value="Expressed in olfactory system and 12 other cell types or tissues"/>
</dbReference>
<dbReference type="GO" id="GO:0031012">
    <property type="term" value="C:extracellular matrix"/>
    <property type="evidence" value="ECO:0000318"/>
    <property type="project" value="GO_Central"/>
</dbReference>
<dbReference type="GO" id="GO:0005615">
    <property type="term" value="C:extracellular space"/>
    <property type="evidence" value="ECO:0000318"/>
    <property type="project" value="GO_Central"/>
</dbReference>
<dbReference type="GO" id="GO:0016020">
    <property type="term" value="C:membrane"/>
    <property type="evidence" value="ECO:0007669"/>
    <property type="project" value="UniProtKB-SubCell"/>
</dbReference>
<dbReference type="FunFam" id="3.80.10.10:FF:000069">
    <property type="entry name" value="leucine-rich repeat-containing protein 3B"/>
    <property type="match status" value="1"/>
</dbReference>
<dbReference type="Gene3D" id="3.80.10.10">
    <property type="entry name" value="Ribonuclease Inhibitor"/>
    <property type="match status" value="1"/>
</dbReference>
<dbReference type="InterPro" id="IPR001611">
    <property type="entry name" value="Leu-rich_rpt"/>
</dbReference>
<dbReference type="InterPro" id="IPR003591">
    <property type="entry name" value="Leu-rich_rpt_typical-subtyp"/>
</dbReference>
<dbReference type="InterPro" id="IPR032675">
    <property type="entry name" value="LRR_dom_sf"/>
</dbReference>
<dbReference type="InterPro" id="IPR000372">
    <property type="entry name" value="LRRNT"/>
</dbReference>
<dbReference type="PANTHER" id="PTHR24365:SF541">
    <property type="entry name" value="PROTEIN TOLL-RELATED"/>
    <property type="match status" value="1"/>
</dbReference>
<dbReference type="PANTHER" id="PTHR24365">
    <property type="entry name" value="TOLL-LIKE RECEPTOR"/>
    <property type="match status" value="1"/>
</dbReference>
<dbReference type="Pfam" id="PF00560">
    <property type="entry name" value="LRR_1"/>
    <property type="match status" value="1"/>
</dbReference>
<dbReference type="Pfam" id="PF13855">
    <property type="entry name" value="LRR_8"/>
    <property type="match status" value="1"/>
</dbReference>
<dbReference type="SMART" id="SM00369">
    <property type="entry name" value="LRR_TYP"/>
    <property type="match status" value="3"/>
</dbReference>
<dbReference type="SMART" id="SM00013">
    <property type="entry name" value="LRRNT"/>
    <property type="match status" value="1"/>
</dbReference>
<dbReference type="SUPFAM" id="SSF52058">
    <property type="entry name" value="L domain-like"/>
    <property type="match status" value="1"/>
</dbReference>
<dbReference type="PROSITE" id="PS51450">
    <property type="entry name" value="LRR"/>
    <property type="match status" value="2"/>
</dbReference>
<organism>
    <name type="scientific">Danio rerio</name>
    <name type="common">Zebrafish</name>
    <name type="synonym">Brachydanio rerio</name>
    <dbReference type="NCBI Taxonomy" id="7955"/>
    <lineage>
        <taxon>Eukaryota</taxon>
        <taxon>Metazoa</taxon>
        <taxon>Chordata</taxon>
        <taxon>Craniata</taxon>
        <taxon>Vertebrata</taxon>
        <taxon>Euteleostomi</taxon>
        <taxon>Actinopterygii</taxon>
        <taxon>Neopterygii</taxon>
        <taxon>Teleostei</taxon>
        <taxon>Ostariophysi</taxon>
        <taxon>Cypriniformes</taxon>
        <taxon>Danionidae</taxon>
        <taxon>Danioninae</taxon>
        <taxon>Danio</taxon>
    </lineage>
</organism>
<feature type="signal peptide" evidence="1">
    <location>
        <begin position="1"/>
        <end position="33"/>
    </location>
</feature>
<feature type="chain" id="PRO_0000345966" description="Leucine-rich repeat-containing protein 3B">
    <location>
        <begin position="34"/>
        <end position="258"/>
    </location>
</feature>
<feature type="transmembrane region" description="Helical" evidence="1">
    <location>
        <begin position="204"/>
        <end position="224"/>
    </location>
</feature>
<feature type="domain" description="LRRNT">
    <location>
        <begin position="34"/>
        <end position="68"/>
    </location>
</feature>
<feature type="repeat" description="LRR 1">
    <location>
        <begin position="69"/>
        <end position="90"/>
    </location>
</feature>
<feature type="repeat" description="LRR 2">
    <location>
        <begin position="93"/>
        <end position="114"/>
    </location>
</feature>
<feature type="repeat" description="LRR 3">
    <location>
        <begin position="118"/>
        <end position="139"/>
    </location>
</feature>
<feature type="domain" description="LRRCT">
    <location>
        <begin position="149"/>
        <end position="196"/>
    </location>
</feature>
<feature type="glycosylation site" description="N-linked (GlcNAc...) asparagine" evidence="1">
    <location>
        <position position="51"/>
    </location>
</feature>
<feature type="glycosylation site" description="N-linked (GlcNAc...) asparagine" evidence="1">
    <location>
        <position position="98"/>
    </location>
</feature>
<name>LRC3B_DANRE</name>
<reference key="1">
    <citation type="submission" date="2007-03" db="EMBL/GenBank/DDBJ databases">
        <authorList>
            <consortium name="NIH - Zebrafish Gene Collection (ZGC) project"/>
        </authorList>
    </citation>
    <scope>NUCLEOTIDE SEQUENCE [LARGE SCALE MRNA]</scope>
    <source>
        <tissue>Ovary</tissue>
    </source>
</reference>
<evidence type="ECO:0000255" key="1"/>
<evidence type="ECO:0000305" key="2"/>
<proteinExistence type="evidence at transcript level"/>
<keyword id="KW-0325">Glycoprotein</keyword>
<keyword id="KW-0433">Leucine-rich repeat</keyword>
<keyword id="KW-0472">Membrane</keyword>
<keyword id="KW-1185">Reference proteome</keyword>
<keyword id="KW-0677">Repeat</keyword>
<keyword id="KW-0732">Signal</keyword>
<keyword id="KW-0812">Transmembrane</keyword>
<keyword id="KW-1133">Transmembrane helix</keyword>
<sequence length="258" mass="29100">MTPLDLWLSRSIPMCLLLQSLVLMVLCFPSASTCPKGCTCQRSESPPHGLNVTCSLSRLKEIPPDVPPDTQLLQLDRNHISLVPDRIFHGLRMLRRLNLSHNAVETLGEGAFIGLEGSLEVLDLSYNRITSVHKDAFARLKARVVVDNNPWHCDCALQQALGGMAHNHERVLCRSSELRDQEGQPFMAVDADLCNLAKRTTDYAMLVTMFGWFAMVISYVVYYVRQNQEDARRHLEYLKSLPSKPKKPDEPEDISTVV</sequence>